<protein>
    <recommendedName>
        <fullName evidence="1">Protein ApaG</fullName>
    </recommendedName>
</protein>
<sequence length="125" mass="13867">MINSPRVCIQVQSVYIEAQSSPDNERYVFAYTVTIRNLGRAPVQLLGRYWLITNGNGRETEVQGEGVVGVQPLIAPGEEYQYTSGAIIETPLGTMQGHYEMIDENGVPFSIDIPVFRLAVPTLIH</sequence>
<accession>B7MNQ9</accession>
<gene>
    <name evidence="1" type="primary">apaG</name>
    <name type="ordered locus">ECED1_0051</name>
</gene>
<proteinExistence type="inferred from homology"/>
<feature type="chain" id="PRO_1000148498" description="Protein ApaG">
    <location>
        <begin position="1"/>
        <end position="125"/>
    </location>
</feature>
<feature type="domain" description="ApaG" evidence="1">
    <location>
        <begin position="1"/>
        <end position="125"/>
    </location>
</feature>
<name>APAG_ECO81</name>
<dbReference type="EMBL" id="CU928162">
    <property type="protein sequence ID" value="CAR06274.1"/>
    <property type="molecule type" value="Genomic_DNA"/>
</dbReference>
<dbReference type="RefSeq" id="WP_000610901.1">
    <property type="nucleotide sequence ID" value="NC_011745.1"/>
</dbReference>
<dbReference type="SMR" id="B7MNQ9"/>
<dbReference type="GeneID" id="93777385"/>
<dbReference type="KEGG" id="ecq:ECED1_0051"/>
<dbReference type="HOGENOM" id="CLU_128074_0_0_6"/>
<dbReference type="Proteomes" id="UP000000748">
    <property type="component" value="Chromosome"/>
</dbReference>
<dbReference type="GO" id="GO:0070987">
    <property type="term" value="P:error-free translesion synthesis"/>
    <property type="evidence" value="ECO:0007669"/>
    <property type="project" value="TreeGrafter"/>
</dbReference>
<dbReference type="Gene3D" id="2.60.40.1470">
    <property type="entry name" value="ApaG domain"/>
    <property type="match status" value="1"/>
</dbReference>
<dbReference type="HAMAP" id="MF_00791">
    <property type="entry name" value="ApaG"/>
    <property type="match status" value="1"/>
</dbReference>
<dbReference type="InterPro" id="IPR007474">
    <property type="entry name" value="ApaG_domain"/>
</dbReference>
<dbReference type="InterPro" id="IPR036767">
    <property type="entry name" value="ApaG_sf"/>
</dbReference>
<dbReference type="InterPro" id="IPR023065">
    <property type="entry name" value="Uncharacterised_ApaG"/>
</dbReference>
<dbReference type="NCBIfam" id="NF003967">
    <property type="entry name" value="PRK05461.1"/>
    <property type="match status" value="1"/>
</dbReference>
<dbReference type="PANTHER" id="PTHR14289">
    <property type="entry name" value="F-BOX ONLY PROTEIN 3"/>
    <property type="match status" value="1"/>
</dbReference>
<dbReference type="PANTHER" id="PTHR14289:SF16">
    <property type="entry name" value="POLYMERASE DELTA-INTERACTING PROTEIN 2"/>
    <property type="match status" value="1"/>
</dbReference>
<dbReference type="Pfam" id="PF04379">
    <property type="entry name" value="DUF525"/>
    <property type="match status" value="1"/>
</dbReference>
<dbReference type="SUPFAM" id="SSF110069">
    <property type="entry name" value="ApaG-like"/>
    <property type="match status" value="1"/>
</dbReference>
<dbReference type="PROSITE" id="PS51087">
    <property type="entry name" value="APAG"/>
    <property type="match status" value="1"/>
</dbReference>
<organism>
    <name type="scientific">Escherichia coli O81 (strain ED1a)</name>
    <dbReference type="NCBI Taxonomy" id="585397"/>
    <lineage>
        <taxon>Bacteria</taxon>
        <taxon>Pseudomonadati</taxon>
        <taxon>Pseudomonadota</taxon>
        <taxon>Gammaproteobacteria</taxon>
        <taxon>Enterobacterales</taxon>
        <taxon>Enterobacteriaceae</taxon>
        <taxon>Escherichia</taxon>
    </lineage>
</organism>
<reference key="1">
    <citation type="journal article" date="2009" name="PLoS Genet.">
        <title>Organised genome dynamics in the Escherichia coli species results in highly diverse adaptive paths.</title>
        <authorList>
            <person name="Touchon M."/>
            <person name="Hoede C."/>
            <person name="Tenaillon O."/>
            <person name="Barbe V."/>
            <person name="Baeriswyl S."/>
            <person name="Bidet P."/>
            <person name="Bingen E."/>
            <person name="Bonacorsi S."/>
            <person name="Bouchier C."/>
            <person name="Bouvet O."/>
            <person name="Calteau A."/>
            <person name="Chiapello H."/>
            <person name="Clermont O."/>
            <person name="Cruveiller S."/>
            <person name="Danchin A."/>
            <person name="Diard M."/>
            <person name="Dossat C."/>
            <person name="Karoui M.E."/>
            <person name="Frapy E."/>
            <person name="Garry L."/>
            <person name="Ghigo J.M."/>
            <person name="Gilles A.M."/>
            <person name="Johnson J."/>
            <person name="Le Bouguenec C."/>
            <person name="Lescat M."/>
            <person name="Mangenot S."/>
            <person name="Martinez-Jehanne V."/>
            <person name="Matic I."/>
            <person name="Nassif X."/>
            <person name="Oztas S."/>
            <person name="Petit M.A."/>
            <person name="Pichon C."/>
            <person name="Rouy Z."/>
            <person name="Ruf C.S."/>
            <person name="Schneider D."/>
            <person name="Tourret J."/>
            <person name="Vacherie B."/>
            <person name="Vallenet D."/>
            <person name="Medigue C."/>
            <person name="Rocha E.P.C."/>
            <person name="Denamur E."/>
        </authorList>
    </citation>
    <scope>NUCLEOTIDE SEQUENCE [LARGE SCALE GENOMIC DNA]</scope>
    <source>
        <strain>ED1a</strain>
    </source>
</reference>
<evidence type="ECO:0000255" key="1">
    <source>
        <dbReference type="HAMAP-Rule" id="MF_00791"/>
    </source>
</evidence>